<protein>
    <recommendedName>
        <fullName>Actin-related protein 2</fullName>
    </recommendedName>
    <alternativeName>
        <fullName>Actin-like protein 2</fullName>
    </alternativeName>
</protein>
<evidence type="ECO:0000250" key="1">
    <source>
        <dbReference type="UniProtKB" id="A7MB62"/>
    </source>
</evidence>
<evidence type="ECO:0000250" key="2">
    <source>
        <dbReference type="UniProtKB" id="P61160"/>
    </source>
</evidence>
<evidence type="ECO:0000305" key="3"/>
<keyword id="KW-0007">Acetylation</keyword>
<keyword id="KW-0009">Actin-binding</keyword>
<keyword id="KW-0067">ATP-binding</keyword>
<keyword id="KW-0966">Cell projection</keyword>
<keyword id="KW-0963">Cytoplasm</keyword>
<keyword id="KW-0206">Cytoskeleton</keyword>
<keyword id="KW-0547">Nucleotide-binding</keyword>
<keyword id="KW-0539">Nucleus</keyword>
<keyword id="KW-1185">Reference proteome</keyword>
<feature type="chain" id="PRO_0000089069" description="Actin-related protein 2">
    <location>
        <begin position="1"/>
        <end position="394"/>
    </location>
</feature>
<feature type="binding site" evidence="1">
    <location>
        <begin position="160"/>
        <end position="162"/>
    </location>
    <ligand>
        <name>ATP</name>
        <dbReference type="ChEBI" id="CHEBI:30616"/>
    </ligand>
</feature>
<feature type="binding site" evidence="1">
    <location>
        <begin position="214"/>
        <end position="218"/>
    </location>
    <ligand>
        <name>ATP</name>
        <dbReference type="ChEBI" id="CHEBI:30616"/>
    </ligand>
</feature>
<feature type="binding site" evidence="1">
    <location>
        <begin position="305"/>
        <end position="310"/>
    </location>
    <ligand>
        <name>ATP</name>
        <dbReference type="ChEBI" id="CHEBI:30616"/>
    </ligand>
</feature>
<feature type="modified residue" description="N-acetylmethionine" evidence="2">
    <location>
        <position position="1"/>
    </location>
</feature>
<feature type="modified residue" description="N6-acetyllysine" evidence="2">
    <location>
        <position position="299"/>
    </location>
</feature>
<feature type="modified residue" description="N6-acetyllysine" evidence="2">
    <location>
        <position position="322"/>
    </location>
</feature>
<comment type="function">
    <text evidence="2">ATP-binding component of the Arp2/3 complex, a multiprotein complex that mediates actin polymerization upon stimulation by nucleation-promoting factor (NPF). The Arp2/3 complex mediates the formation of branched actin networks in the cytoplasm, providing the force for cell motility. Seems to contact the pointed end of the daughter actin filament. In podocytes, required for the formation of lamellipodia downstream of AVIL and PLCE1 regulation. In addition to its role in the cytoplasmic cytoskeleton, the Arp2/3 complex also promotes actin polymerization in the nucleus, thereby regulating gene transcription and repair of damaged DNA. The Arp2/3 complex promotes homologous recombination (HR) repair in response to DNA damage by promoting nuclear actin polymerization, leading to drive motility of double-strand breaks (DSBs).</text>
</comment>
<comment type="subunit">
    <text evidence="2">Component of the Arp2/3 complex composed of ACTR2/ARP2, ACTR3/ARP3, ARPC1B/p41-ARC, ARPC2/p34-ARC, ARPC3/p21-ARC, ARPC4/p20-ARC and ARPC5/p16-ARC. Interacts with AVIL.</text>
</comment>
<comment type="subcellular location">
    <subcellularLocation>
        <location evidence="2">Cytoplasm</location>
        <location evidence="2">Cytoskeleton</location>
    </subcellularLocation>
    <subcellularLocation>
        <location evidence="2">Cell projection</location>
    </subcellularLocation>
    <subcellularLocation>
        <location evidence="2">Nucleus</location>
    </subcellularLocation>
</comment>
<comment type="similarity">
    <text evidence="3">Belongs to the actin family. ARP2 subfamily.</text>
</comment>
<name>ARP2_PONAB</name>
<dbReference type="EMBL" id="CR861247">
    <property type="protein sequence ID" value="CAH93316.1"/>
    <property type="molecule type" value="mRNA"/>
</dbReference>
<dbReference type="RefSeq" id="NP_001126951.1">
    <property type="nucleotide sequence ID" value="NM_001133479.1"/>
</dbReference>
<dbReference type="SMR" id="Q5R4K0"/>
<dbReference type="STRING" id="9601.ENSPPYP00000013782"/>
<dbReference type="GeneID" id="100173969"/>
<dbReference type="KEGG" id="pon:100173969"/>
<dbReference type="CTD" id="10097"/>
<dbReference type="eggNOG" id="KOG0677">
    <property type="taxonomic scope" value="Eukaryota"/>
</dbReference>
<dbReference type="InParanoid" id="Q5R4K0"/>
<dbReference type="OrthoDB" id="10251209at2759"/>
<dbReference type="Proteomes" id="UP000001595">
    <property type="component" value="Unplaced"/>
</dbReference>
<dbReference type="GO" id="GO:0005885">
    <property type="term" value="C:Arp2/3 protein complex"/>
    <property type="evidence" value="ECO:0000250"/>
    <property type="project" value="UniProtKB"/>
</dbReference>
<dbReference type="GO" id="GO:0042995">
    <property type="term" value="C:cell projection"/>
    <property type="evidence" value="ECO:0007669"/>
    <property type="project" value="UniProtKB-SubCell"/>
</dbReference>
<dbReference type="GO" id="GO:0005737">
    <property type="term" value="C:cytoplasm"/>
    <property type="evidence" value="ECO:0000250"/>
    <property type="project" value="UniProtKB"/>
</dbReference>
<dbReference type="GO" id="GO:0005634">
    <property type="term" value="C:nucleus"/>
    <property type="evidence" value="ECO:0000250"/>
    <property type="project" value="UniProtKB"/>
</dbReference>
<dbReference type="GO" id="GO:0035861">
    <property type="term" value="C:site of double-strand break"/>
    <property type="evidence" value="ECO:0000250"/>
    <property type="project" value="UniProtKB"/>
</dbReference>
<dbReference type="GO" id="GO:0003779">
    <property type="term" value="F:actin binding"/>
    <property type="evidence" value="ECO:0007669"/>
    <property type="project" value="UniProtKB-KW"/>
</dbReference>
<dbReference type="GO" id="GO:0005524">
    <property type="term" value="F:ATP binding"/>
    <property type="evidence" value="ECO:0007669"/>
    <property type="project" value="UniProtKB-KW"/>
</dbReference>
<dbReference type="GO" id="GO:0034314">
    <property type="term" value="P:Arp2/3 complex-mediated actin nucleation"/>
    <property type="evidence" value="ECO:0000250"/>
    <property type="project" value="UniProtKB"/>
</dbReference>
<dbReference type="GO" id="GO:1905168">
    <property type="term" value="P:positive regulation of double-strand break repair via homologous recombination"/>
    <property type="evidence" value="ECO:0000250"/>
    <property type="project" value="UniProtKB"/>
</dbReference>
<dbReference type="GO" id="GO:0010592">
    <property type="term" value="P:positive regulation of lamellipodium assembly"/>
    <property type="evidence" value="ECO:0000250"/>
    <property type="project" value="UniProtKB"/>
</dbReference>
<dbReference type="GO" id="GO:0045944">
    <property type="term" value="P:positive regulation of transcription by RNA polymerase II"/>
    <property type="evidence" value="ECO:0000250"/>
    <property type="project" value="UniProtKB"/>
</dbReference>
<dbReference type="CDD" id="cd10220">
    <property type="entry name" value="ASKHA_NBD_Arp2"/>
    <property type="match status" value="1"/>
</dbReference>
<dbReference type="FunFam" id="3.30.420.40:FF:000538">
    <property type="entry name" value="Actin-related protein 2"/>
    <property type="match status" value="1"/>
</dbReference>
<dbReference type="FunFam" id="3.90.640.10:FF:000005">
    <property type="entry name" value="Actin-related protein 2"/>
    <property type="match status" value="1"/>
</dbReference>
<dbReference type="Gene3D" id="3.30.420.40">
    <property type="match status" value="2"/>
</dbReference>
<dbReference type="Gene3D" id="3.90.640.10">
    <property type="entry name" value="Actin, Chain A, domain 4"/>
    <property type="match status" value="1"/>
</dbReference>
<dbReference type="InterPro" id="IPR004000">
    <property type="entry name" value="Actin"/>
</dbReference>
<dbReference type="InterPro" id="IPR020902">
    <property type="entry name" value="Actin/actin-like_CS"/>
</dbReference>
<dbReference type="InterPro" id="IPR043129">
    <property type="entry name" value="ATPase_NBD"/>
</dbReference>
<dbReference type="PANTHER" id="PTHR11937">
    <property type="entry name" value="ACTIN"/>
    <property type="match status" value="1"/>
</dbReference>
<dbReference type="Pfam" id="PF00022">
    <property type="entry name" value="Actin"/>
    <property type="match status" value="1"/>
</dbReference>
<dbReference type="PRINTS" id="PR00190">
    <property type="entry name" value="ACTIN"/>
</dbReference>
<dbReference type="SMART" id="SM00268">
    <property type="entry name" value="ACTIN"/>
    <property type="match status" value="1"/>
</dbReference>
<dbReference type="SUPFAM" id="SSF53067">
    <property type="entry name" value="Actin-like ATPase domain"/>
    <property type="match status" value="2"/>
</dbReference>
<dbReference type="PROSITE" id="PS01132">
    <property type="entry name" value="ACTINS_ACT_LIKE"/>
    <property type="match status" value="1"/>
</dbReference>
<reference key="1">
    <citation type="submission" date="2004-11" db="EMBL/GenBank/DDBJ databases">
        <authorList>
            <consortium name="The German cDNA consortium"/>
        </authorList>
    </citation>
    <scope>NUCLEOTIDE SEQUENCE [LARGE SCALE MRNA]</scope>
    <source>
        <tissue>Brain cortex</tissue>
    </source>
</reference>
<sequence length="394" mass="44819">MDSQGRKVVVCDNGTGFVKCGYAGSNFPEHIFPALVGRPIIRSTTKVGNIEIKDLMVGDEASELRSMLEVNYPMENGIVRNWDDMKHLWDYTFGPEKLNIDTRNCKILLTEPPMNPTKNREKIVEVMFETYQFSGVYVAIQAVLTLYAQGLLTGVVVDSGDGVTHICPVYEDFSLPHLTRRLDIAGRDITRYLIKLLLLRGYAFNHSADFETVRMIKEKLCYVGYNIEQEQKLALETTVLVESYTLPDGRIIKVGGERFEAPEALFQPHLINVEGVGVAELLFNTIQAADIDTRSEFYKHIVLSGGSTMYPGLPSRLERELKQLYLERVLKGDVEKLSKFKIRIEDPPRRKHMVFLGGAVLADIMKDKDNFWMTRQEYQEKGVRVLEKLGVTVR</sequence>
<gene>
    <name type="primary">ACTR2</name>
    <name type="synonym">ARP2</name>
</gene>
<accession>Q5R4K0</accession>
<organism>
    <name type="scientific">Pongo abelii</name>
    <name type="common">Sumatran orangutan</name>
    <name type="synonym">Pongo pygmaeus abelii</name>
    <dbReference type="NCBI Taxonomy" id="9601"/>
    <lineage>
        <taxon>Eukaryota</taxon>
        <taxon>Metazoa</taxon>
        <taxon>Chordata</taxon>
        <taxon>Craniata</taxon>
        <taxon>Vertebrata</taxon>
        <taxon>Euteleostomi</taxon>
        <taxon>Mammalia</taxon>
        <taxon>Eutheria</taxon>
        <taxon>Euarchontoglires</taxon>
        <taxon>Primates</taxon>
        <taxon>Haplorrhini</taxon>
        <taxon>Catarrhini</taxon>
        <taxon>Hominidae</taxon>
        <taxon>Pongo</taxon>
    </lineage>
</organism>
<proteinExistence type="evidence at transcript level"/>